<dbReference type="EC" id="3.4.13.21" evidence="1"/>
<dbReference type="EMBL" id="CP000681">
    <property type="protein sequence ID" value="ABP76056.1"/>
    <property type="molecule type" value="Genomic_DNA"/>
</dbReference>
<dbReference type="SMR" id="A4Y7X3"/>
<dbReference type="STRING" id="319224.Sputcn32_2335"/>
<dbReference type="MEROPS" id="S51.001"/>
<dbReference type="KEGG" id="spc:Sputcn32_2335"/>
<dbReference type="eggNOG" id="COG3340">
    <property type="taxonomic scope" value="Bacteria"/>
</dbReference>
<dbReference type="HOGENOM" id="CLU_071689_0_0_6"/>
<dbReference type="GO" id="GO:0005737">
    <property type="term" value="C:cytoplasm"/>
    <property type="evidence" value="ECO:0007669"/>
    <property type="project" value="UniProtKB-SubCell"/>
</dbReference>
<dbReference type="GO" id="GO:0016805">
    <property type="term" value="F:dipeptidase activity"/>
    <property type="evidence" value="ECO:0007669"/>
    <property type="project" value="UniProtKB-UniRule"/>
</dbReference>
<dbReference type="GO" id="GO:0008236">
    <property type="term" value="F:serine-type peptidase activity"/>
    <property type="evidence" value="ECO:0007669"/>
    <property type="project" value="UniProtKB-KW"/>
</dbReference>
<dbReference type="GO" id="GO:0006508">
    <property type="term" value="P:proteolysis"/>
    <property type="evidence" value="ECO:0007669"/>
    <property type="project" value="UniProtKB-UniRule"/>
</dbReference>
<dbReference type="CDD" id="cd03146">
    <property type="entry name" value="GAT1_Peptidase_E"/>
    <property type="match status" value="1"/>
</dbReference>
<dbReference type="FunFam" id="3.40.50.880:FF:000007">
    <property type="entry name" value="Peptidase E"/>
    <property type="match status" value="1"/>
</dbReference>
<dbReference type="Gene3D" id="3.40.50.880">
    <property type="match status" value="1"/>
</dbReference>
<dbReference type="HAMAP" id="MF_00510">
    <property type="entry name" value="Peptidase_E"/>
    <property type="match status" value="1"/>
</dbReference>
<dbReference type="InterPro" id="IPR029062">
    <property type="entry name" value="Class_I_gatase-like"/>
</dbReference>
<dbReference type="InterPro" id="IPR005320">
    <property type="entry name" value="Peptidase_S51"/>
</dbReference>
<dbReference type="InterPro" id="IPR023172">
    <property type="entry name" value="Peptidase_S51_dipeptidase-E"/>
</dbReference>
<dbReference type="NCBIfam" id="NF003642">
    <property type="entry name" value="PRK05282.1"/>
    <property type="match status" value="1"/>
</dbReference>
<dbReference type="PANTHER" id="PTHR20842:SF0">
    <property type="entry name" value="ALPHA-ASPARTYL DIPEPTIDASE"/>
    <property type="match status" value="1"/>
</dbReference>
<dbReference type="PANTHER" id="PTHR20842">
    <property type="entry name" value="PROTEASE S51 ALPHA-ASPARTYL DIPEPTIDASE"/>
    <property type="match status" value="1"/>
</dbReference>
<dbReference type="Pfam" id="PF03575">
    <property type="entry name" value="Peptidase_S51"/>
    <property type="match status" value="1"/>
</dbReference>
<dbReference type="SUPFAM" id="SSF52317">
    <property type="entry name" value="Class I glutamine amidotransferase-like"/>
    <property type="match status" value="1"/>
</dbReference>
<keyword id="KW-0963">Cytoplasm</keyword>
<keyword id="KW-0224">Dipeptidase</keyword>
<keyword id="KW-0378">Hydrolase</keyword>
<keyword id="KW-0645">Protease</keyword>
<keyword id="KW-0720">Serine protease</keyword>
<name>PEPE_SHEPC</name>
<reference key="1">
    <citation type="submission" date="2007-04" db="EMBL/GenBank/DDBJ databases">
        <title>Complete sequence of Shewanella putrefaciens CN-32.</title>
        <authorList>
            <consortium name="US DOE Joint Genome Institute"/>
            <person name="Copeland A."/>
            <person name="Lucas S."/>
            <person name="Lapidus A."/>
            <person name="Barry K."/>
            <person name="Detter J.C."/>
            <person name="Glavina del Rio T."/>
            <person name="Hammon N."/>
            <person name="Israni S."/>
            <person name="Dalin E."/>
            <person name="Tice H."/>
            <person name="Pitluck S."/>
            <person name="Chain P."/>
            <person name="Malfatti S."/>
            <person name="Shin M."/>
            <person name="Vergez L."/>
            <person name="Schmutz J."/>
            <person name="Larimer F."/>
            <person name="Land M."/>
            <person name="Hauser L."/>
            <person name="Kyrpides N."/>
            <person name="Mikhailova N."/>
            <person name="Romine M.F."/>
            <person name="Fredrickson J."/>
            <person name="Tiedje J."/>
            <person name="Richardson P."/>
        </authorList>
    </citation>
    <scope>NUCLEOTIDE SEQUENCE [LARGE SCALE GENOMIC DNA]</scope>
    <source>
        <strain>CN-32 / ATCC BAA-453</strain>
    </source>
</reference>
<sequence length="236" mass="25952">MTINALLLSSSRVGDTPYLAHAIPFIKPLTTQAQKWIFIPYAGVSMSYDTYLASVVMGLAELNLDISGIHQHPDPCQAIKDADGILIGGGNTFHLLHELYRYNLINLIREKVAQGTPYVGWSAGANVSGASIKTTNDMPIIEPPSFDALKIVPFQLNPHYSNYRTPGHNGETRAQRLLEFTKVEPLTPVIAIAEGSALWRRDNTLVLLGENPAYLFCGEQQEMLIPIGSDLSHLLK</sequence>
<evidence type="ECO:0000255" key="1">
    <source>
        <dbReference type="HAMAP-Rule" id="MF_00510"/>
    </source>
</evidence>
<accession>A4Y7X3</accession>
<gene>
    <name evidence="1" type="primary">pepE</name>
    <name type="ordered locus">Sputcn32_2335</name>
</gene>
<comment type="function">
    <text evidence="1">Hydrolyzes dipeptides containing N-terminal aspartate residues. May play a role in allowing the cell to use peptide aspartate to spare carbon otherwise required for the synthesis of the aspartate family of amino acids.</text>
</comment>
<comment type="catalytic activity">
    <reaction evidence="1">
        <text>Dipeptidase E catalyzes the hydrolysis of dipeptides Asp-|-Xaa. It does not act on peptides with N-terminal Glu, Asn or Gln, nor does it cleave isoaspartyl peptides.</text>
        <dbReference type="EC" id="3.4.13.21"/>
    </reaction>
</comment>
<comment type="subcellular location">
    <subcellularLocation>
        <location evidence="1">Cytoplasm</location>
    </subcellularLocation>
</comment>
<comment type="similarity">
    <text evidence="1">Belongs to the peptidase S51 family.</text>
</comment>
<feature type="chain" id="PRO_1000050617" description="Peptidase E">
    <location>
        <begin position="1"/>
        <end position="236"/>
    </location>
</feature>
<feature type="active site" description="Charge relay system" evidence="1">
    <location>
        <position position="122"/>
    </location>
</feature>
<feature type="active site" description="Charge relay system" evidence="1">
    <location>
        <position position="137"/>
    </location>
</feature>
<feature type="active site" description="Charge relay system" evidence="1">
    <location>
        <position position="159"/>
    </location>
</feature>
<proteinExistence type="inferred from homology"/>
<protein>
    <recommendedName>
        <fullName evidence="1">Peptidase E</fullName>
        <ecNumber evidence="1">3.4.13.21</ecNumber>
    </recommendedName>
    <alternativeName>
        <fullName evidence="1">Alpha-aspartyl dipeptidase</fullName>
    </alternativeName>
    <alternativeName>
        <fullName evidence="1">Asp-specific dipeptidase</fullName>
    </alternativeName>
    <alternativeName>
        <fullName evidence="1">Dipeptidase E</fullName>
    </alternativeName>
</protein>
<organism>
    <name type="scientific">Shewanella putrefaciens (strain CN-32 / ATCC BAA-453)</name>
    <dbReference type="NCBI Taxonomy" id="319224"/>
    <lineage>
        <taxon>Bacteria</taxon>
        <taxon>Pseudomonadati</taxon>
        <taxon>Pseudomonadota</taxon>
        <taxon>Gammaproteobacteria</taxon>
        <taxon>Alteromonadales</taxon>
        <taxon>Shewanellaceae</taxon>
        <taxon>Shewanella</taxon>
    </lineage>
</organism>